<feature type="chain" id="PRO_1000066119" description="D-amino acid dehydrogenase">
    <location>
        <begin position="1"/>
        <end position="432"/>
    </location>
</feature>
<feature type="binding site" evidence="1">
    <location>
        <begin position="3"/>
        <end position="17"/>
    </location>
    <ligand>
        <name>FAD</name>
        <dbReference type="ChEBI" id="CHEBI:57692"/>
    </ligand>
</feature>
<name>DADA_SHISS</name>
<evidence type="ECO:0000255" key="1">
    <source>
        <dbReference type="HAMAP-Rule" id="MF_01202"/>
    </source>
</evidence>
<comment type="function">
    <text evidence="1">Oxidative deamination of D-amino acids.</text>
</comment>
<comment type="catalytic activity">
    <reaction evidence="1">
        <text>a D-alpha-amino acid + A + H2O = a 2-oxocarboxylate + AH2 + NH4(+)</text>
        <dbReference type="Rhea" id="RHEA:18125"/>
        <dbReference type="ChEBI" id="CHEBI:13193"/>
        <dbReference type="ChEBI" id="CHEBI:15377"/>
        <dbReference type="ChEBI" id="CHEBI:17499"/>
        <dbReference type="ChEBI" id="CHEBI:28938"/>
        <dbReference type="ChEBI" id="CHEBI:35179"/>
        <dbReference type="ChEBI" id="CHEBI:59871"/>
    </reaction>
</comment>
<comment type="cofactor">
    <cofactor evidence="1">
        <name>FAD</name>
        <dbReference type="ChEBI" id="CHEBI:57692"/>
    </cofactor>
</comment>
<comment type="pathway">
    <text>Amino-acid degradation; D-alanine degradation; NH(3) and pyruvate from D-alanine: step 1/1.</text>
</comment>
<comment type="similarity">
    <text evidence="1">Belongs to the DadA oxidoreductase family.</text>
</comment>
<gene>
    <name evidence="1" type="primary">dadA</name>
    <name type="ordered locus">SSON_1181</name>
</gene>
<sequence length="432" mass="47607">MRVVILGSGVVGVASAWYLNQAGHEVTVIDREPGAALETSAANAGQISPGYAAPWAAPGVPLKAIKWMFQRHAPLAVRLDGTQFQLKWMWQMLRNCDTSHYMENKGRMVRLAEYSRDCLKALRAETNIQYEGRQGGTLQLFRTEQQYENATRDIAVLEDAGVPYQLLESSRLAEVEPALAEVAHKLTGGLQLPNDETGDCQLFTQNLARMAEQAGVKFRFNTPVDQLLCDGEQIYGVKCGDEVIKADAYVMAFGSYSTAMLKGIVDIPVYPLKGYSLTIPIAQEDGAPVSTILDETYKIAITRFDNRIRVGGMAEIVGFNTELLQPRRETLEMVVRDLYPRGGHVEQATFWTGLRPMTPDGTPVVGRTRFKNLWLNTGHGTLGWTMACGSGQLLSDLLSGRTPAIPYEDLSVARYSRGFTPSRPGHLHGAHS</sequence>
<organism>
    <name type="scientific">Shigella sonnei (strain Ss046)</name>
    <dbReference type="NCBI Taxonomy" id="300269"/>
    <lineage>
        <taxon>Bacteria</taxon>
        <taxon>Pseudomonadati</taxon>
        <taxon>Pseudomonadota</taxon>
        <taxon>Gammaproteobacteria</taxon>
        <taxon>Enterobacterales</taxon>
        <taxon>Enterobacteriaceae</taxon>
        <taxon>Shigella</taxon>
    </lineage>
</organism>
<keyword id="KW-0274">FAD</keyword>
<keyword id="KW-0285">Flavoprotein</keyword>
<keyword id="KW-0560">Oxidoreductase</keyword>
<keyword id="KW-1185">Reference proteome</keyword>
<reference key="1">
    <citation type="journal article" date="2005" name="Nucleic Acids Res.">
        <title>Genome dynamics and diversity of Shigella species, the etiologic agents of bacillary dysentery.</title>
        <authorList>
            <person name="Yang F."/>
            <person name="Yang J."/>
            <person name="Zhang X."/>
            <person name="Chen L."/>
            <person name="Jiang Y."/>
            <person name="Yan Y."/>
            <person name="Tang X."/>
            <person name="Wang J."/>
            <person name="Xiong Z."/>
            <person name="Dong J."/>
            <person name="Xue Y."/>
            <person name="Zhu Y."/>
            <person name="Xu X."/>
            <person name="Sun L."/>
            <person name="Chen S."/>
            <person name="Nie H."/>
            <person name="Peng J."/>
            <person name="Xu J."/>
            <person name="Wang Y."/>
            <person name="Yuan Z."/>
            <person name="Wen Y."/>
            <person name="Yao Z."/>
            <person name="Shen Y."/>
            <person name="Qiang B."/>
            <person name="Hou Y."/>
            <person name="Yu J."/>
            <person name="Jin Q."/>
        </authorList>
    </citation>
    <scope>NUCLEOTIDE SEQUENCE [LARGE SCALE GENOMIC DNA]</scope>
    <source>
        <strain>Ss046</strain>
    </source>
</reference>
<protein>
    <recommendedName>
        <fullName evidence="1">D-amino acid dehydrogenase</fullName>
        <ecNumber evidence="1">1.4.99.-</ecNumber>
    </recommendedName>
</protein>
<dbReference type="EC" id="1.4.99.-" evidence="1"/>
<dbReference type="EMBL" id="CP000038">
    <property type="protein sequence ID" value="AAZ87903.1"/>
    <property type="molecule type" value="Genomic_DNA"/>
</dbReference>
<dbReference type="RefSeq" id="WP_001266908.1">
    <property type="nucleotide sequence ID" value="NC_007384.1"/>
</dbReference>
<dbReference type="SMR" id="Q3Z2V9"/>
<dbReference type="GeneID" id="93776243"/>
<dbReference type="KEGG" id="ssn:SSON_1181"/>
<dbReference type="HOGENOM" id="CLU_007884_9_2_6"/>
<dbReference type="UniPathway" id="UPA00043">
    <property type="reaction ID" value="UER00498"/>
</dbReference>
<dbReference type="Proteomes" id="UP000002529">
    <property type="component" value="Chromosome"/>
</dbReference>
<dbReference type="GO" id="GO:0005737">
    <property type="term" value="C:cytoplasm"/>
    <property type="evidence" value="ECO:0007669"/>
    <property type="project" value="TreeGrafter"/>
</dbReference>
<dbReference type="GO" id="GO:0005886">
    <property type="term" value="C:plasma membrane"/>
    <property type="evidence" value="ECO:0007669"/>
    <property type="project" value="TreeGrafter"/>
</dbReference>
<dbReference type="GO" id="GO:0008718">
    <property type="term" value="F:D-amino-acid dehydrogenase activity"/>
    <property type="evidence" value="ECO:0007669"/>
    <property type="project" value="UniProtKB-UniRule"/>
</dbReference>
<dbReference type="GO" id="GO:0055130">
    <property type="term" value="P:D-alanine catabolic process"/>
    <property type="evidence" value="ECO:0007669"/>
    <property type="project" value="UniProtKB-UniPathway"/>
</dbReference>
<dbReference type="FunFam" id="3.50.50.60:FF:000020">
    <property type="entry name" value="D-amino acid dehydrogenase"/>
    <property type="match status" value="1"/>
</dbReference>
<dbReference type="Gene3D" id="3.30.9.10">
    <property type="entry name" value="D-Amino Acid Oxidase, subunit A, domain 2"/>
    <property type="match status" value="1"/>
</dbReference>
<dbReference type="Gene3D" id="3.50.50.60">
    <property type="entry name" value="FAD/NAD(P)-binding domain"/>
    <property type="match status" value="2"/>
</dbReference>
<dbReference type="HAMAP" id="MF_01202">
    <property type="entry name" value="DadA"/>
    <property type="match status" value="1"/>
</dbReference>
<dbReference type="InterPro" id="IPR023080">
    <property type="entry name" value="DadA"/>
</dbReference>
<dbReference type="InterPro" id="IPR006076">
    <property type="entry name" value="FAD-dep_OxRdtase"/>
</dbReference>
<dbReference type="InterPro" id="IPR036188">
    <property type="entry name" value="FAD/NAD-bd_sf"/>
</dbReference>
<dbReference type="NCBIfam" id="NF001933">
    <property type="entry name" value="PRK00711.1"/>
    <property type="match status" value="1"/>
</dbReference>
<dbReference type="PANTHER" id="PTHR13847:SF280">
    <property type="entry name" value="D-AMINO ACID DEHYDROGENASE"/>
    <property type="match status" value="1"/>
</dbReference>
<dbReference type="PANTHER" id="PTHR13847">
    <property type="entry name" value="SARCOSINE DEHYDROGENASE-RELATED"/>
    <property type="match status" value="1"/>
</dbReference>
<dbReference type="Pfam" id="PF01266">
    <property type="entry name" value="DAO"/>
    <property type="match status" value="1"/>
</dbReference>
<dbReference type="SUPFAM" id="SSF54373">
    <property type="entry name" value="FAD-linked reductases, C-terminal domain"/>
    <property type="match status" value="1"/>
</dbReference>
<dbReference type="SUPFAM" id="SSF51905">
    <property type="entry name" value="FAD/NAD(P)-binding domain"/>
    <property type="match status" value="1"/>
</dbReference>
<accession>Q3Z2V9</accession>
<proteinExistence type="inferred from homology"/>